<protein>
    <recommendedName>
        <fullName evidence="1">Photosystem II reaction center protein K</fullName>
        <shortName evidence="1">PSII-K</shortName>
    </recommendedName>
</protein>
<comment type="function">
    <text evidence="1">One of the components of the core complex of photosystem II (PSII). PSII is a light-driven water:plastoquinone oxidoreductase that uses light energy to abstract electrons from H(2)O, generating O(2) and a proton gradient subsequently used for ATP formation. It consists of a core antenna complex that captures photons, and an electron transfer chain that converts photonic excitation into a charge separation.</text>
</comment>
<comment type="subunit">
    <text evidence="1">PSII is composed of 1 copy each of membrane proteins PsbA, PsbB, PsbC, PsbD, PsbE, PsbF, PsbH, PsbI, PsbJ, PsbK, PsbL, PsbM, PsbT, PsbX, PsbY, PsbZ, Psb30/Ycf12, at least 3 peripheral proteins of the oxygen-evolving complex and a large number of cofactors. It forms dimeric complexes.</text>
</comment>
<comment type="subcellular location">
    <subcellularLocation>
        <location evidence="1">Plastid</location>
        <location evidence="1">Chloroplast thylakoid membrane</location>
        <topology evidence="1">Single-pass membrane protein</topology>
    </subcellularLocation>
</comment>
<comment type="similarity">
    <text evidence="1">Belongs to the PsbK family.</text>
</comment>
<gene>
    <name evidence="1" type="primary">psbK</name>
</gene>
<dbReference type="EMBL" id="AB237912">
    <property type="protein sequence ID" value="BAE46629.1"/>
    <property type="molecule type" value="Genomic_DNA"/>
</dbReference>
<dbReference type="RefSeq" id="YP_358654.1">
    <property type="nucleotide sequence ID" value="NC_007500.1"/>
</dbReference>
<dbReference type="SMR" id="Q3C1G0"/>
<dbReference type="GeneID" id="3735110"/>
<dbReference type="KEGG" id="nsy:3735110"/>
<dbReference type="OrthoDB" id="24897at4085"/>
<dbReference type="Proteomes" id="UP000189701">
    <property type="component" value="Chloroplast Pltd"/>
</dbReference>
<dbReference type="GO" id="GO:0009535">
    <property type="term" value="C:chloroplast thylakoid membrane"/>
    <property type="evidence" value="ECO:0007669"/>
    <property type="project" value="UniProtKB-SubCell"/>
</dbReference>
<dbReference type="GO" id="GO:0009539">
    <property type="term" value="C:photosystem II reaction center"/>
    <property type="evidence" value="ECO:0007669"/>
    <property type="project" value="InterPro"/>
</dbReference>
<dbReference type="GO" id="GO:0015979">
    <property type="term" value="P:photosynthesis"/>
    <property type="evidence" value="ECO:0007669"/>
    <property type="project" value="UniProtKB-UniRule"/>
</dbReference>
<dbReference type="HAMAP" id="MF_00441">
    <property type="entry name" value="PSII_PsbK"/>
    <property type="match status" value="1"/>
</dbReference>
<dbReference type="InterPro" id="IPR003687">
    <property type="entry name" value="PSII_PsbK"/>
</dbReference>
<dbReference type="InterPro" id="IPR037270">
    <property type="entry name" value="PSII_PsbK_sf"/>
</dbReference>
<dbReference type="NCBIfam" id="NF002715">
    <property type="entry name" value="PRK02553.1"/>
    <property type="match status" value="1"/>
</dbReference>
<dbReference type="PANTHER" id="PTHR35325">
    <property type="match status" value="1"/>
</dbReference>
<dbReference type="PANTHER" id="PTHR35325:SF1">
    <property type="entry name" value="PHOTOSYSTEM II REACTION CENTER PROTEIN K"/>
    <property type="match status" value="1"/>
</dbReference>
<dbReference type="Pfam" id="PF02533">
    <property type="entry name" value="PsbK"/>
    <property type="match status" value="1"/>
</dbReference>
<dbReference type="SUPFAM" id="SSF161037">
    <property type="entry name" value="Photosystem II reaction center protein K, PsbK"/>
    <property type="match status" value="1"/>
</dbReference>
<proteinExistence type="inferred from homology"/>
<geneLocation type="chloroplast"/>
<accession>Q3C1G0</accession>
<organism>
    <name type="scientific">Nicotiana sylvestris</name>
    <name type="common">Wood tobacco</name>
    <name type="synonym">South American tobacco</name>
    <dbReference type="NCBI Taxonomy" id="4096"/>
    <lineage>
        <taxon>Eukaryota</taxon>
        <taxon>Viridiplantae</taxon>
        <taxon>Streptophyta</taxon>
        <taxon>Embryophyta</taxon>
        <taxon>Tracheophyta</taxon>
        <taxon>Spermatophyta</taxon>
        <taxon>Magnoliopsida</taxon>
        <taxon>eudicotyledons</taxon>
        <taxon>Gunneridae</taxon>
        <taxon>Pentapetalae</taxon>
        <taxon>asterids</taxon>
        <taxon>lamiids</taxon>
        <taxon>Solanales</taxon>
        <taxon>Solanaceae</taxon>
        <taxon>Nicotianoideae</taxon>
        <taxon>Nicotianeae</taxon>
        <taxon>Nicotiana</taxon>
    </lineage>
</organism>
<name>PSBK_NICSY</name>
<sequence length="61" mass="6914">MLNTFSLIGICLNSTLFSSSFFFGKLPEAYAFLNPIVDIMPVIPLFFFLLAFVWQAAVSFR</sequence>
<reference key="1">
    <citation type="journal article" date="2006" name="Mol. Genet. Genomics">
        <title>The chloroplast genome of Nicotiana sylvestris and Nicotiana tomentosiformis: complete sequencing confirms that the Nicotiana sylvestris progenitor is the maternal genome donor of Nicotiana tabacum.</title>
        <authorList>
            <person name="Yukawa M."/>
            <person name="Tsudzuki T."/>
            <person name="Sugiura M."/>
        </authorList>
    </citation>
    <scope>NUCLEOTIDE SEQUENCE [LARGE SCALE GENOMIC DNA]</scope>
</reference>
<feature type="propeptide" id="PRO_0000276156" evidence="1">
    <location>
        <begin position="1"/>
        <end position="24"/>
    </location>
</feature>
<feature type="chain" id="PRO_0000276157" description="Photosystem II reaction center protein K" evidence="1">
    <location>
        <begin position="25"/>
        <end position="61"/>
    </location>
</feature>
<feature type="transmembrane region" description="Helical" evidence="1">
    <location>
        <begin position="36"/>
        <end position="56"/>
    </location>
</feature>
<evidence type="ECO:0000255" key="1">
    <source>
        <dbReference type="HAMAP-Rule" id="MF_00441"/>
    </source>
</evidence>
<keyword id="KW-0150">Chloroplast</keyword>
<keyword id="KW-0472">Membrane</keyword>
<keyword id="KW-0602">Photosynthesis</keyword>
<keyword id="KW-0604">Photosystem II</keyword>
<keyword id="KW-0934">Plastid</keyword>
<keyword id="KW-0674">Reaction center</keyword>
<keyword id="KW-1185">Reference proteome</keyword>
<keyword id="KW-0793">Thylakoid</keyword>
<keyword id="KW-0812">Transmembrane</keyword>
<keyword id="KW-1133">Transmembrane helix</keyword>